<comment type="function">
    <text evidence="1">The RuvA-RuvB-RuvC complex processes Holliday junction (HJ) DNA during genetic recombination and DNA repair. Endonuclease that resolves HJ intermediates. Cleaves cruciform DNA by making single-stranded nicks across the HJ at symmetrical positions within the homologous arms, yielding a 5'-phosphate and a 3'-hydroxyl group; requires a central core of homology in the junction. The consensus cleavage sequence is 5'-(A/T)TT(C/G)-3'. Cleavage occurs on the 3'-side of the TT dinucleotide at the point of strand exchange. HJ branch migration catalyzed by RuvA-RuvB allows RuvC to scan DNA until it finds its consensus sequence, where it cleaves and resolves the cruciform DNA.</text>
</comment>
<comment type="catalytic activity">
    <reaction evidence="1">
        <text>Endonucleolytic cleavage at a junction such as a reciprocal single-stranded crossover between two homologous DNA duplexes (Holliday junction).</text>
        <dbReference type="EC" id="3.1.21.10"/>
    </reaction>
</comment>
<comment type="cofactor">
    <cofactor evidence="1">
        <name>Mg(2+)</name>
        <dbReference type="ChEBI" id="CHEBI:18420"/>
    </cofactor>
    <text evidence="1">Binds 2 Mg(2+) ion per subunit.</text>
</comment>
<comment type="subunit">
    <text evidence="1">Homodimer which binds Holliday junction (HJ) DNA. The HJ becomes 2-fold symmetrical on binding to RuvC with unstacked arms; it has a different conformation from HJ DNA in complex with RuvA. In the full resolvosome a probable DNA-RuvA(4)-RuvB(12)-RuvC(2) complex forms which resolves the HJ.</text>
</comment>
<comment type="subcellular location">
    <subcellularLocation>
        <location evidence="1">Cytoplasm</location>
    </subcellularLocation>
</comment>
<comment type="similarity">
    <text evidence="1">Belongs to the RuvC family.</text>
</comment>
<feature type="chain" id="PRO_1000002802" description="Crossover junction endodeoxyribonuclease RuvC">
    <location>
        <begin position="1"/>
        <end position="174"/>
    </location>
</feature>
<feature type="active site" evidence="1">
    <location>
        <position position="8"/>
    </location>
</feature>
<feature type="active site" evidence="1">
    <location>
        <position position="67"/>
    </location>
</feature>
<feature type="active site" evidence="1">
    <location>
        <position position="139"/>
    </location>
</feature>
<feature type="binding site" evidence="1">
    <location>
        <position position="8"/>
    </location>
    <ligand>
        <name>Mg(2+)</name>
        <dbReference type="ChEBI" id="CHEBI:18420"/>
        <label>1</label>
    </ligand>
</feature>
<feature type="binding site" evidence="1">
    <location>
        <position position="67"/>
    </location>
    <ligand>
        <name>Mg(2+)</name>
        <dbReference type="ChEBI" id="CHEBI:18420"/>
        <label>2</label>
    </ligand>
</feature>
<feature type="binding site" evidence="1">
    <location>
        <position position="139"/>
    </location>
    <ligand>
        <name>Mg(2+)</name>
        <dbReference type="ChEBI" id="CHEBI:18420"/>
        <label>1</label>
    </ligand>
</feature>
<dbReference type="EC" id="3.1.21.10" evidence="1"/>
<dbReference type="EMBL" id="CP000680">
    <property type="protein sequence ID" value="ABP84035.1"/>
    <property type="molecule type" value="Genomic_DNA"/>
</dbReference>
<dbReference type="SMR" id="A4XRR9"/>
<dbReference type="STRING" id="399739.Pmen_1270"/>
<dbReference type="KEGG" id="pmy:Pmen_1270"/>
<dbReference type="PATRIC" id="fig|399739.8.peg.1285"/>
<dbReference type="eggNOG" id="COG0817">
    <property type="taxonomic scope" value="Bacteria"/>
</dbReference>
<dbReference type="HOGENOM" id="CLU_091257_2_1_6"/>
<dbReference type="OrthoDB" id="9805499at2"/>
<dbReference type="GO" id="GO:0005737">
    <property type="term" value="C:cytoplasm"/>
    <property type="evidence" value="ECO:0007669"/>
    <property type="project" value="UniProtKB-SubCell"/>
</dbReference>
<dbReference type="GO" id="GO:0048476">
    <property type="term" value="C:Holliday junction resolvase complex"/>
    <property type="evidence" value="ECO:0007669"/>
    <property type="project" value="UniProtKB-UniRule"/>
</dbReference>
<dbReference type="GO" id="GO:0008821">
    <property type="term" value="F:crossover junction DNA endonuclease activity"/>
    <property type="evidence" value="ECO:0007669"/>
    <property type="project" value="UniProtKB-UniRule"/>
</dbReference>
<dbReference type="GO" id="GO:0003677">
    <property type="term" value="F:DNA binding"/>
    <property type="evidence" value="ECO:0007669"/>
    <property type="project" value="UniProtKB-KW"/>
</dbReference>
<dbReference type="GO" id="GO:0000287">
    <property type="term" value="F:magnesium ion binding"/>
    <property type="evidence" value="ECO:0007669"/>
    <property type="project" value="UniProtKB-UniRule"/>
</dbReference>
<dbReference type="GO" id="GO:0006310">
    <property type="term" value="P:DNA recombination"/>
    <property type="evidence" value="ECO:0007669"/>
    <property type="project" value="UniProtKB-UniRule"/>
</dbReference>
<dbReference type="GO" id="GO:0006281">
    <property type="term" value="P:DNA repair"/>
    <property type="evidence" value="ECO:0007669"/>
    <property type="project" value="UniProtKB-UniRule"/>
</dbReference>
<dbReference type="CDD" id="cd16962">
    <property type="entry name" value="RuvC"/>
    <property type="match status" value="1"/>
</dbReference>
<dbReference type="FunFam" id="3.30.420.10:FF:000002">
    <property type="entry name" value="Crossover junction endodeoxyribonuclease RuvC"/>
    <property type="match status" value="1"/>
</dbReference>
<dbReference type="Gene3D" id="3.30.420.10">
    <property type="entry name" value="Ribonuclease H-like superfamily/Ribonuclease H"/>
    <property type="match status" value="1"/>
</dbReference>
<dbReference type="HAMAP" id="MF_00034">
    <property type="entry name" value="RuvC"/>
    <property type="match status" value="1"/>
</dbReference>
<dbReference type="InterPro" id="IPR012337">
    <property type="entry name" value="RNaseH-like_sf"/>
</dbReference>
<dbReference type="InterPro" id="IPR036397">
    <property type="entry name" value="RNaseH_sf"/>
</dbReference>
<dbReference type="InterPro" id="IPR020563">
    <property type="entry name" value="X-over_junc_endoDNase_Mg_BS"/>
</dbReference>
<dbReference type="InterPro" id="IPR002176">
    <property type="entry name" value="X-over_junc_endoDNase_RuvC"/>
</dbReference>
<dbReference type="NCBIfam" id="TIGR00228">
    <property type="entry name" value="ruvC"/>
    <property type="match status" value="1"/>
</dbReference>
<dbReference type="PANTHER" id="PTHR30194">
    <property type="entry name" value="CROSSOVER JUNCTION ENDODEOXYRIBONUCLEASE RUVC"/>
    <property type="match status" value="1"/>
</dbReference>
<dbReference type="PANTHER" id="PTHR30194:SF3">
    <property type="entry name" value="CROSSOVER JUNCTION ENDODEOXYRIBONUCLEASE RUVC"/>
    <property type="match status" value="1"/>
</dbReference>
<dbReference type="Pfam" id="PF02075">
    <property type="entry name" value="RuvC"/>
    <property type="match status" value="1"/>
</dbReference>
<dbReference type="PRINTS" id="PR00696">
    <property type="entry name" value="RSOLVASERUVC"/>
</dbReference>
<dbReference type="SUPFAM" id="SSF53098">
    <property type="entry name" value="Ribonuclease H-like"/>
    <property type="match status" value="1"/>
</dbReference>
<dbReference type="PROSITE" id="PS01321">
    <property type="entry name" value="RUVC"/>
    <property type="match status" value="1"/>
</dbReference>
<reference key="1">
    <citation type="submission" date="2007-04" db="EMBL/GenBank/DDBJ databases">
        <title>Complete sequence of Pseudomonas mendocina ymp.</title>
        <authorList>
            <consortium name="US DOE Joint Genome Institute"/>
            <person name="Copeland A."/>
            <person name="Lucas S."/>
            <person name="Lapidus A."/>
            <person name="Barry K."/>
            <person name="Glavina del Rio T."/>
            <person name="Dalin E."/>
            <person name="Tice H."/>
            <person name="Pitluck S."/>
            <person name="Kiss H."/>
            <person name="Brettin T."/>
            <person name="Detter J.C."/>
            <person name="Bruce D."/>
            <person name="Han C."/>
            <person name="Schmutz J."/>
            <person name="Larimer F."/>
            <person name="Land M."/>
            <person name="Hauser L."/>
            <person name="Kyrpides N."/>
            <person name="Mikhailova N."/>
            <person name="Hersman L."/>
            <person name="Dubois J."/>
            <person name="Maurice P."/>
            <person name="Richardson P."/>
        </authorList>
    </citation>
    <scope>NUCLEOTIDE SEQUENCE [LARGE SCALE GENOMIC DNA]</scope>
    <source>
        <strain>ymp</strain>
    </source>
</reference>
<evidence type="ECO:0000255" key="1">
    <source>
        <dbReference type="HAMAP-Rule" id="MF_00034"/>
    </source>
</evidence>
<protein>
    <recommendedName>
        <fullName evidence="1">Crossover junction endodeoxyribonuclease RuvC</fullName>
        <ecNumber evidence="1">3.1.21.10</ecNumber>
    </recommendedName>
    <alternativeName>
        <fullName evidence="1">Holliday junction nuclease RuvC</fullName>
    </alternativeName>
    <alternativeName>
        <fullName evidence="1">Holliday junction resolvase RuvC</fullName>
    </alternativeName>
</protein>
<sequence>MTLILGIDPGSRITGYGVVRDTGRGCEYVASGCIRTGDGPLAERLQIVFRGVSEVIRTHGPVTMGIEQVFMARNADSALKLGQARGAAIVAAVEAGLEISEYTATQVKQAVVGTGAADKQQVQMMVMHLLKLVQKPQIDASDALGIALCHAHHRQSLIPHGLASAKRRGGRLRL</sequence>
<gene>
    <name evidence="1" type="primary">ruvC</name>
    <name type="ordered locus">Pmen_1270</name>
</gene>
<proteinExistence type="inferred from homology"/>
<accession>A4XRR9</accession>
<name>RUVC_ECTM1</name>
<keyword id="KW-0963">Cytoplasm</keyword>
<keyword id="KW-0227">DNA damage</keyword>
<keyword id="KW-0233">DNA recombination</keyword>
<keyword id="KW-0234">DNA repair</keyword>
<keyword id="KW-0238">DNA-binding</keyword>
<keyword id="KW-0255">Endonuclease</keyword>
<keyword id="KW-0378">Hydrolase</keyword>
<keyword id="KW-0460">Magnesium</keyword>
<keyword id="KW-0479">Metal-binding</keyword>
<keyword id="KW-0540">Nuclease</keyword>
<organism>
    <name type="scientific">Ectopseudomonas mendocina (strain ymp)</name>
    <name type="common">Pseudomonas mendocina</name>
    <dbReference type="NCBI Taxonomy" id="399739"/>
    <lineage>
        <taxon>Bacteria</taxon>
        <taxon>Pseudomonadati</taxon>
        <taxon>Pseudomonadota</taxon>
        <taxon>Gammaproteobacteria</taxon>
        <taxon>Pseudomonadales</taxon>
        <taxon>Pseudomonadaceae</taxon>
        <taxon>Ectopseudomonas</taxon>
    </lineage>
</organism>